<protein>
    <recommendedName>
        <fullName evidence="3 4">Mu-theraphotoxin-Ca2a</fullName>
        <shortName evidence="3">Mu-TRTX-Ca2a</shortName>
    </recommendedName>
</protein>
<keyword id="KW-0903">Direct protein sequencing</keyword>
<keyword id="KW-1015">Disulfide bond</keyword>
<keyword id="KW-0872">Ion channel impairing toxin</keyword>
<keyword id="KW-0960">Knottin</keyword>
<keyword id="KW-0528">Neurotoxin</keyword>
<keyword id="KW-0964">Secreted</keyword>
<keyword id="KW-0800">Toxin</keyword>
<keyword id="KW-0738">Voltage-gated sodium channel impairing toxin</keyword>
<comment type="function">
    <text evidence="2">Potently inhibits Nav1.7/SCN9A (IC(50)=98.1 nM), and moderately inhibits Nav1.2/SCN2A (IC(50)=216.3 nM), Nav1.6/SCN8A (IC(50)=313.6 nM), and Nav1.3/SCN3A (IC(50)=491.3 nM). Hyperpolarizes the slow inactivation, but does not alter the voltage-dependent activation or fast inactivation of Nav1.7/SCN9A. Binds with Nav1.7/SCN9A at the extracellular S3-S4 linker of domain II (site 4). In vivo, exhibits dose-dependent analgesic efficacy by reducing pain responses in rodent models of formalin-induced paw licking, hot plate test, and acetic acid-induced writhing.</text>
</comment>
<comment type="subcellular location">
    <subcellularLocation>
        <location evidence="2">Secreted</location>
    </subcellularLocation>
</comment>
<comment type="tissue specificity">
    <text evidence="5">Expressed by the venom gland.</text>
</comment>
<comment type="domain">
    <text evidence="1">The presence of a 'disulfide through disulfide knot' structurally defines this protein as a knottin.</text>
</comment>
<comment type="mass spectrometry"/>
<comment type="miscellaneous">
    <text evidence="2">Negative results: has no effect on Nav1.4/SCN4A, Nav1.5/SCN5A, Nav1.8/SCN10A, and Nav1.9/SCN11A (IC(50)&gt;10 uM).</text>
</comment>
<comment type="similarity">
    <text evidence="4">Belongs to the neurotoxin 10 (Hwtx-1) family. 10 (haplotoxin-1) subfamily.</text>
</comment>
<accession>P0DRJ5</accession>
<evidence type="ECO:0000250" key="1">
    <source>
        <dbReference type="UniProtKB" id="D2Y1X6"/>
    </source>
</evidence>
<evidence type="ECO:0000269" key="2">
    <source>
    </source>
</evidence>
<evidence type="ECO:0000303" key="3">
    <source>
    </source>
</evidence>
<evidence type="ECO:0000305" key="4"/>
<evidence type="ECO:0000305" key="5">
    <source>
    </source>
</evidence>
<name>HTX2A_CYRAL</name>
<reference key="1">
    <citation type="journal article" date="2018" name="Front. Pharmacol.">
        <title>Discovery of a novel Nav1.7 inhibitor from Cyriopagopus albostriatus venom with potent analgesic efficacy.</title>
        <authorList>
            <person name="Zhang Y."/>
            <person name="Peng D."/>
            <person name="Huang B."/>
            <person name="Yang Q."/>
            <person name="Zhang Q."/>
            <person name="Chen M."/>
            <person name="Rong M."/>
            <person name="Liu Z."/>
        </authorList>
    </citation>
    <scope>PROTEIN SEQUENCE</scope>
    <scope>FUNCTION</scope>
    <scope>BIOASSAY</scope>
    <scope>SUBCELLULAR LOCATION</scope>
    <scope>MASS SPECTROMETRY</scope>
    <source>
        <tissue>Venom</tissue>
    </source>
</reference>
<feature type="chain" id="PRO_0000462504" description="Mu-theraphotoxin-Ca2a" evidence="2">
    <location>
        <begin position="1"/>
        <end position="35"/>
    </location>
</feature>
<feature type="disulfide bond" evidence="1">
    <location>
        <begin position="2"/>
        <end position="17"/>
    </location>
</feature>
<feature type="disulfide bond" evidence="1">
    <location>
        <begin position="9"/>
        <end position="24"/>
    </location>
</feature>
<feature type="disulfide bond" evidence="1">
    <location>
        <begin position="16"/>
        <end position="31"/>
    </location>
</feature>
<organism>
    <name type="scientific">Cyriopagopus albostriatus</name>
    <name type="common">Cambodian tiger tarantula</name>
    <name type="synonym">Selenocosmia albostriata</name>
    <dbReference type="NCBI Taxonomy" id="3400809"/>
    <lineage>
        <taxon>Eukaryota</taxon>
        <taxon>Metazoa</taxon>
        <taxon>Ecdysozoa</taxon>
        <taxon>Arthropoda</taxon>
        <taxon>Chelicerata</taxon>
        <taxon>Arachnida</taxon>
        <taxon>Araneae</taxon>
        <taxon>Mygalomorphae</taxon>
        <taxon>Theraphosidae</taxon>
        <taxon>Cyriopagopus</taxon>
    </lineage>
</organism>
<proteinExistence type="evidence at protein level"/>
<sequence>ACLGFGEKCNPSNDKCCKSSSLVCSQKHKWCKYDL</sequence>